<reference key="1">
    <citation type="journal article" date="2006" name="Nat. Biotechnol.">
        <title>The genome and transcriptomes of the anti-tumor agent Clostridium novyi-NT.</title>
        <authorList>
            <person name="Bettegowda C."/>
            <person name="Huang X."/>
            <person name="Lin J."/>
            <person name="Cheong I."/>
            <person name="Kohli M."/>
            <person name="Szabo S.A."/>
            <person name="Zhang X."/>
            <person name="Diaz L.A. Jr."/>
            <person name="Velculescu V.E."/>
            <person name="Parmigiani G."/>
            <person name="Kinzler K.W."/>
            <person name="Vogelstein B."/>
            <person name="Zhou S."/>
        </authorList>
    </citation>
    <scope>NUCLEOTIDE SEQUENCE [LARGE SCALE GENOMIC DNA]</scope>
    <source>
        <strain>NT</strain>
    </source>
</reference>
<evidence type="ECO:0000255" key="1">
    <source>
        <dbReference type="HAMAP-Rule" id="MF_01274"/>
    </source>
</evidence>
<dbReference type="EC" id="2.7.1.33" evidence="1"/>
<dbReference type="EMBL" id="CP000382">
    <property type="protein sequence ID" value="ABK60870.1"/>
    <property type="molecule type" value="Genomic_DNA"/>
</dbReference>
<dbReference type="RefSeq" id="WP_011721154.1">
    <property type="nucleotide sequence ID" value="NC_008593.1"/>
</dbReference>
<dbReference type="SMR" id="A0PXN1"/>
<dbReference type="STRING" id="386415.NT01CX_1043"/>
<dbReference type="KEGG" id="cno:NT01CX_1043"/>
<dbReference type="eggNOG" id="COG1521">
    <property type="taxonomic scope" value="Bacteria"/>
</dbReference>
<dbReference type="HOGENOM" id="CLU_066627_1_0_9"/>
<dbReference type="UniPathway" id="UPA00241">
    <property type="reaction ID" value="UER00352"/>
</dbReference>
<dbReference type="Proteomes" id="UP000008220">
    <property type="component" value="Chromosome"/>
</dbReference>
<dbReference type="GO" id="GO:0005737">
    <property type="term" value="C:cytoplasm"/>
    <property type="evidence" value="ECO:0007669"/>
    <property type="project" value="UniProtKB-SubCell"/>
</dbReference>
<dbReference type="GO" id="GO:0005524">
    <property type="term" value="F:ATP binding"/>
    <property type="evidence" value="ECO:0007669"/>
    <property type="project" value="UniProtKB-UniRule"/>
</dbReference>
<dbReference type="GO" id="GO:0046872">
    <property type="term" value="F:metal ion binding"/>
    <property type="evidence" value="ECO:0007669"/>
    <property type="project" value="UniProtKB-KW"/>
</dbReference>
<dbReference type="GO" id="GO:0004594">
    <property type="term" value="F:pantothenate kinase activity"/>
    <property type="evidence" value="ECO:0007669"/>
    <property type="project" value="UniProtKB-UniRule"/>
</dbReference>
<dbReference type="GO" id="GO:0015937">
    <property type="term" value="P:coenzyme A biosynthetic process"/>
    <property type="evidence" value="ECO:0007669"/>
    <property type="project" value="UniProtKB-UniRule"/>
</dbReference>
<dbReference type="CDD" id="cd24015">
    <property type="entry name" value="ASKHA_NBD_PanK-III"/>
    <property type="match status" value="1"/>
</dbReference>
<dbReference type="Gene3D" id="3.30.420.40">
    <property type="match status" value="2"/>
</dbReference>
<dbReference type="HAMAP" id="MF_01274">
    <property type="entry name" value="Pantothen_kinase_3"/>
    <property type="match status" value="1"/>
</dbReference>
<dbReference type="InterPro" id="IPR043129">
    <property type="entry name" value="ATPase_NBD"/>
</dbReference>
<dbReference type="InterPro" id="IPR004619">
    <property type="entry name" value="Type_III_PanK"/>
</dbReference>
<dbReference type="NCBIfam" id="TIGR00671">
    <property type="entry name" value="baf"/>
    <property type="match status" value="1"/>
</dbReference>
<dbReference type="NCBIfam" id="NF009847">
    <property type="entry name" value="PRK13318.1-5"/>
    <property type="match status" value="1"/>
</dbReference>
<dbReference type="NCBIfam" id="NF009848">
    <property type="entry name" value="PRK13318.1-6"/>
    <property type="match status" value="1"/>
</dbReference>
<dbReference type="NCBIfam" id="NF009855">
    <property type="entry name" value="PRK13321.1"/>
    <property type="match status" value="1"/>
</dbReference>
<dbReference type="PANTHER" id="PTHR34265">
    <property type="entry name" value="TYPE III PANTOTHENATE KINASE"/>
    <property type="match status" value="1"/>
</dbReference>
<dbReference type="PANTHER" id="PTHR34265:SF1">
    <property type="entry name" value="TYPE III PANTOTHENATE KINASE"/>
    <property type="match status" value="1"/>
</dbReference>
<dbReference type="Pfam" id="PF03309">
    <property type="entry name" value="Pan_kinase"/>
    <property type="match status" value="1"/>
</dbReference>
<dbReference type="SUPFAM" id="SSF53067">
    <property type="entry name" value="Actin-like ATPase domain"/>
    <property type="match status" value="2"/>
</dbReference>
<name>COAX_CLONN</name>
<accession>A0PXN1</accession>
<keyword id="KW-0067">ATP-binding</keyword>
<keyword id="KW-0173">Coenzyme A biosynthesis</keyword>
<keyword id="KW-0963">Cytoplasm</keyword>
<keyword id="KW-0418">Kinase</keyword>
<keyword id="KW-0479">Metal-binding</keyword>
<keyword id="KW-0547">Nucleotide-binding</keyword>
<keyword id="KW-0630">Potassium</keyword>
<keyword id="KW-1185">Reference proteome</keyword>
<keyword id="KW-0808">Transferase</keyword>
<sequence length="259" mass="28134">MLFVLDAGNTNIVLGIYKGKELVLECRLGTDAKRTADEYGIQVLKLLSHNNIDPKDIEGVIISSVVPNIMYSIEHMIRKYFKIDPIVVGPGVKTGINIKYDNPKSVGADRIVNAVAAHALFEKPLVIIDFGTATTYCAVTKKGDYLGGAICPGIKISAAALFEKAAKLPRIELIKPPHVICKNTVSSMQAGIVYGYIGQVDYIVSKIKEEMIALGEGEPYVIATGGFAGLISEESKTIDEVCPFLTLEGLRVIYEKNKE</sequence>
<comment type="function">
    <text evidence="1">Catalyzes the phosphorylation of pantothenate (Pan), the first step in CoA biosynthesis.</text>
</comment>
<comment type="catalytic activity">
    <reaction evidence="1">
        <text>(R)-pantothenate + ATP = (R)-4'-phosphopantothenate + ADP + H(+)</text>
        <dbReference type="Rhea" id="RHEA:16373"/>
        <dbReference type="ChEBI" id="CHEBI:10986"/>
        <dbReference type="ChEBI" id="CHEBI:15378"/>
        <dbReference type="ChEBI" id="CHEBI:29032"/>
        <dbReference type="ChEBI" id="CHEBI:30616"/>
        <dbReference type="ChEBI" id="CHEBI:456216"/>
        <dbReference type="EC" id="2.7.1.33"/>
    </reaction>
</comment>
<comment type="cofactor">
    <cofactor evidence="1">
        <name>NH4(+)</name>
        <dbReference type="ChEBI" id="CHEBI:28938"/>
    </cofactor>
    <cofactor evidence="1">
        <name>K(+)</name>
        <dbReference type="ChEBI" id="CHEBI:29103"/>
    </cofactor>
    <text evidence="1">A monovalent cation. Ammonium or potassium.</text>
</comment>
<comment type="pathway">
    <text evidence="1">Cofactor biosynthesis; coenzyme A biosynthesis; CoA from (R)-pantothenate: step 1/5.</text>
</comment>
<comment type="subunit">
    <text evidence="1">Homodimer.</text>
</comment>
<comment type="subcellular location">
    <subcellularLocation>
        <location evidence="1">Cytoplasm</location>
    </subcellularLocation>
</comment>
<comment type="similarity">
    <text evidence="1">Belongs to the type III pantothenate kinase family.</text>
</comment>
<protein>
    <recommendedName>
        <fullName evidence="1">Type III pantothenate kinase</fullName>
        <ecNumber evidence="1">2.7.1.33</ecNumber>
    </recommendedName>
    <alternativeName>
        <fullName evidence="1">PanK-III</fullName>
    </alternativeName>
    <alternativeName>
        <fullName evidence="1">Pantothenic acid kinase</fullName>
    </alternativeName>
</protein>
<organism>
    <name type="scientific">Clostridium novyi (strain NT)</name>
    <dbReference type="NCBI Taxonomy" id="386415"/>
    <lineage>
        <taxon>Bacteria</taxon>
        <taxon>Bacillati</taxon>
        <taxon>Bacillota</taxon>
        <taxon>Clostridia</taxon>
        <taxon>Eubacteriales</taxon>
        <taxon>Clostridiaceae</taxon>
        <taxon>Clostridium</taxon>
    </lineage>
</organism>
<proteinExistence type="inferred from homology"/>
<gene>
    <name evidence="1" type="primary">coaX</name>
    <name type="ordered locus">NT01CX_1043</name>
</gene>
<feature type="chain" id="PRO_1000054372" description="Type III pantothenate kinase">
    <location>
        <begin position="1"/>
        <end position="259"/>
    </location>
</feature>
<feature type="active site" description="Proton acceptor" evidence="1">
    <location>
        <position position="109"/>
    </location>
</feature>
<feature type="binding site" evidence="1">
    <location>
        <begin position="6"/>
        <end position="13"/>
    </location>
    <ligand>
        <name>ATP</name>
        <dbReference type="ChEBI" id="CHEBI:30616"/>
    </ligand>
</feature>
<feature type="binding site" evidence="1">
    <location>
        <position position="100"/>
    </location>
    <ligand>
        <name>substrate</name>
    </ligand>
</feature>
<feature type="binding site" evidence="1">
    <location>
        <begin position="107"/>
        <end position="110"/>
    </location>
    <ligand>
        <name>substrate</name>
    </ligand>
</feature>
<feature type="binding site" evidence="1">
    <location>
        <position position="129"/>
    </location>
    <ligand>
        <name>K(+)</name>
        <dbReference type="ChEBI" id="CHEBI:29103"/>
    </ligand>
</feature>
<feature type="binding site" evidence="1">
    <location>
        <position position="132"/>
    </location>
    <ligand>
        <name>ATP</name>
        <dbReference type="ChEBI" id="CHEBI:30616"/>
    </ligand>
</feature>
<feature type="binding site" evidence="1">
    <location>
        <position position="184"/>
    </location>
    <ligand>
        <name>substrate</name>
    </ligand>
</feature>